<keyword id="KW-0028">Amino-acid biosynthesis</keyword>
<keyword id="KW-0057">Aromatic amino acid biosynthesis</keyword>
<keyword id="KW-0521">NADP</keyword>
<keyword id="KW-0560">Oxidoreductase</keyword>
<protein>
    <recommendedName>
        <fullName evidence="1">Shikimate dehydrogenase (NADP(+))</fullName>
        <shortName evidence="1">SDH</shortName>
        <ecNumber evidence="1">1.1.1.25</ecNumber>
    </recommendedName>
</protein>
<accession>B4U4B1</accession>
<feature type="chain" id="PRO_1000100143" description="Shikimate dehydrogenase (NADP(+))">
    <location>
        <begin position="1"/>
        <end position="294"/>
    </location>
</feature>
<feature type="active site" description="Proton acceptor" evidence="1">
    <location>
        <position position="73"/>
    </location>
</feature>
<feature type="binding site" evidence="1">
    <location>
        <begin position="22"/>
        <end position="24"/>
    </location>
    <ligand>
        <name>shikimate</name>
        <dbReference type="ChEBI" id="CHEBI:36208"/>
    </ligand>
</feature>
<feature type="binding site" evidence="1">
    <location>
        <position position="69"/>
    </location>
    <ligand>
        <name>shikimate</name>
        <dbReference type="ChEBI" id="CHEBI:36208"/>
    </ligand>
</feature>
<feature type="binding site" evidence="1">
    <location>
        <position position="94"/>
    </location>
    <ligand>
        <name>shikimate</name>
        <dbReference type="ChEBI" id="CHEBI:36208"/>
    </ligand>
</feature>
<feature type="binding site" evidence="1">
    <location>
        <position position="111"/>
    </location>
    <ligand>
        <name>shikimate</name>
        <dbReference type="ChEBI" id="CHEBI:36208"/>
    </ligand>
</feature>
<feature type="binding site" evidence="1">
    <location>
        <begin position="135"/>
        <end position="139"/>
    </location>
    <ligand>
        <name>NADP(+)</name>
        <dbReference type="ChEBI" id="CHEBI:58349"/>
    </ligand>
</feature>
<feature type="binding site" evidence="1">
    <location>
        <position position="236"/>
    </location>
    <ligand>
        <name>NADP(+)</name>
        <dbReference type="ChEBI" id="CHEBI:58349"/>
    </ligand>
</feature>
<feature type="binding site" evidence="1">
    <location>
        <position position="238"/>
    </location>
    <ligand>
        <name>shikimate</name>
        <dbReference type="ChEBI" id="CHEBI:36208"/>
    </ligand>
</feature>
<feature type="binding site" evidence="1">
    <location>
        <position position="260"/>
    </location>
    <ligand>
        <name>NADP(+)</name>
        <dbReference type="ChEBI" id="CHEBI:58349"/>
    </ligand>
</feature>
<organism>
    <name type="scientific">Streptococcus equi subsp. zooepidemicus (strain MGCS10565)</name>
    <dbReference type="NCBI Taxonomy" id="552526"/>
    <lineage>
        <taxon>Bacteria</taxon>
        <taxon>Bacillati</taxon>
        <taxon>Bacillota</taxon>
        <taxon>Bacilli</taxon>
        <taxon>Lactobacillales</taxon>
        <taxon>Streptococcaceae</taxon>
        <taxon>Streptococcus</taxon>
    </lineage>
</organism>
<reference key="1">
    <citation type="journal article" date="2008" name="PLoS ONE">
        <title>Genome sequence of a lancefield group C Streptococcus zooepidemicus strain causing epidemic nephritis: new information about an old disease.</title>
        <authorList>
            <person name="Beres S.B."/>
            <person name="Sesso R."/>
            <person name="Pinto S.W.L."/>
            <person name="Hoe N.P."/>
            <person name="Porcella S.F."/>
            <person name="Deleo F.R."/>
            <person name="Musser J.M."/>
        </authorList>
    </citation>
    <scope>NUCLEOTIDE SEQUENCE [LARGE SCALE GENOMIC DNA]</scope>
    <source>
        <strain>MGCS10565</strain>
    </source>
</reference>
<name>AROE_STREM</name>
<evidence type="ECO:0000255" key="1">
    <source>
        <dbReference type="HAMAP-Rule" id="MF_00222"/>
    </source>
</evidence>
<sequence length="294" mass="31095">MLERLSGHTRLTALLAAPARHSLSPKMHNAAYAKLGLDYAYLAFEVDNSGLAAAVQGMRALGICGANVSMPNKQAIVPLLDELSPAAALAGAVNTVVNTDGKGHLVGHITDGTGAIRSLAEEGVAIKDQIITIAGAGGAGTAIAVQLGLDGAKEIRLFNRKTATFKQAKQVLKGINAKTSALASLQDLADDRAFRRSIAESSIYIDATGVGMKPLEEHSLITDPALIRPDLVVFDLVYHPAETKLLAFAREHGAKKVMNGLGMLLYQGAEAFKLMTGEDMPVAYIRELLCRNKE</sequence>
<comment type="function">
    <text evidence="1">Involved in the biosynthesis of the chorismate, which leads to the biosynthesis of aromatic amino acids. Catalyzes the reversible NADPH linked reduction of 3-dehydroshikimate (DHSA) to yield shikimate (SA).</text>
</comment>
<comment type="catalytic activity">
    <reaction evidence="1">
        <text>shikimate + NADP(+) = 3-dehydroshikimate + NADPH + H(+)</text>
        <dbReference type="Rhea" id="RHEA:17737"/>
        <dbReference type="ChEBI" id="CHEBI:15378"/>
        <dbReference type="ChEBI" id="CHEBI:16630"/>
        <dbReference type="ChEBI" id="CHEBI:36208"/>
        <dbReference type="ChEBI" id="CHEBI:57783"/>
        <dbReference type="ChEBI" id="CHEBI:58349"/>
        <dbReference type="EC" id="1.1.1.25"/>
    </reaction>
</comment>
<comment type="pathway">
    <text evidence="1">Metabolic intermediate biosynthesis; chorismate biosynthesis; chorismate from D-erythrose 4-phosphate and phosphoenolpyruvate: step 4/7.</text>
</comment>
<comment type="subunit">
    <text evidence="1">Homodimer.</text>
</comment>
<comment type="similarity">
    <text evidence="1">Belongs to the shikimate dehydrogenase family.</text>
</comment>
<dbReference type="EC" id="1.1.1.25" evidence="1"/>
<dbReference type="EMBL" id="CP001129">
    <property type="protein sequence ID" value="ACG62828.1"/>
    <property type="molecule type" value="Genomic_DNA"/>
</dbReference>
<dbReference type="RefSeq" id="WP_012516088.1">
    <property type="nucleotide sequence ID" value="NC_011134.1"/>
</dbReference>
<dbReference type="SMR" id="B4U4B1"/>
<dbReference type="KEGG" id="sez:Sez_1495"/>
<dbReference type="HOGENOM" id="CLU_044063_4_4_9"/>
<dbReference type="UniPathway" id="UPA00053">
    <property type="reaction ID" value="UER00087"/>
</dbReference>
<dbReference type="Proteomes" id="UP000001873">
    <property type="component" value="Chromosome"/>
</dbReference>
<dbReference type="GO" id="GO:0004764">
    <property type="term" value="F:shikimate 3-dehydrogenase (NADP+) activity"/>
    <property type="evidence" value="ECO:0007669"/>
    <property type="project" value="UniProtKB-UniRule"/>
</dbReference>
<dbReference type="GO" id="GO:0008652">
    <property type="term" value="P:amino acid biosynthetic process"/>
    <property type="evidence" value="ECO:0007669"/>
    <property type="project" value="UniProtKB-KW"/>
</dbReference>
<dbReference type="GO" id="GO:0009073">
    <property type="term" value="P:aromatic amino acid family biosynthetic process"/>
    <property type="evidence" value="ECO:0007669"/>
    <property type="project" value="UniProtKB-KW"/>
</dbReference>
<dbReference type="GO" id="GO:0009423">
    <property type="term" value="P:chorismate biosynthetic process"/>
    <property type="evidence" value="ECO:0007669"/>
    <property type="project" value="UniProtKB-UniRule"/>
</dbReference>
<dbReference type="GO" id="GO:0019632">
    <property type="term" value="P:shikimate metabolic process"/>
    <property type="evidence" value="ECO:0007669"/>
    <property type="project" value="TreeGrafter"/>
</dbReference>
<dbReference type="CDD" id="cd01065">
    <property type="entry name" value="NAD_bind_Shikimate_DH"/>
    <property type="match status" value="1"/>
</dbReference>
<dbReference type="FunFam" id="3.40.50.720:FF:000086">
    <property type="entry name" value="Quinate/shikimate dehydrogenase"/>
    <property type="match status" value="1"/>
</dbReference>
<dbReference type="Gene3D" id="3.40.50.10860">
    <property type="entry name" value="Leucine Dehydrogenase, chain A, domain 1"/>
    <property type="match status" value="1"/>
</dbReference>
<dbReference type="Gene3D" id="3.40.50.720">
    <property type="entry name" value="NAD(P)-binding Rossmann-like Domain"/>
    <property type="match status" value="1"/>
</dbReference>
<dbReference type="HAMAP" id="MF_00222">
    <property type="entry name" value="Shikimate_DH_AroE"/>
    <property type="match status" value="1"/>
</dbReference>
<dbReference type="InterPro" id="IPR046346">
    <property type="entry name" value="Aminoacid_DH-like_N_sf"/>
</dbReference>
<dbReference type="InterPro" id="IPR036291">
    <property type="entry name" value="NAD(P)-bd_dom_sf"/>
</dbReference>
<dbReference type="InterPro" id="IPR041121">
    <property type="entry name" value="SDH_C"/>
</dbReference>
<dbReference type="InterPro" id="IPR013708">
    <property type="entry name" value="Shikimate_DH-bd_N"/>
</dbReference>
<dbReference type="InterPro" id="IPR022893">
    <property type="entry name" value="Shikimate_DH_fam"/>
</dbReference>
<dbReference type="PANTHER" id="PTHR21089:SF1">
    <property type="entry name" value="BIFUNCTIONAL 3-DEHYDROQUINATE DEHYDRATASE_SHIKIMATE DEHYDROGENASE, CHLOROPLASTIC"/>
    <property type="match status" value="1"/>
</dbReference>
<dbReference type="PANTHER" id="PTHR21089">
    <property type="entry name" value="SHIKIMATE DEHYDROGENASE"/>
    <property type="match status" value="1"/>
</dbReference>
<dbReference type="Pfam" id="PF18317">
    <property type="entry name" value="SDH_C"/>
    <property type="match status" value="1"/>
</dbReference>
<dbReference type="Pfam" id="PF08501">
    <property type="entry name" value="Shikimate_dh_N"/>
    <property type="match status" value="1"/>
</dbReference>
<dbReference type="SUPFAM" id="SSF53223">
    <property type="entry name" value="Aminoacid dehydrogenase-like, N-terminal domain"/>
    <property type="match status" value="1"/>
</dbReference>
<dbReference type="SUPFAM" id="SSF51735">
    <property type="entry name" value="NAD(P)-binding Rossmann-fold domains"/>
    <property type="match status" value="1"/>
</dbReference>
<proteinExistence type="inferred from homology"/>
<gene>
    <name evidence="1" type="primary">aroE</name>
    <name type="ordered locus">Sez_1495</name>
</gene>